<reference key="1">
    <citation type="journal article" date="2007" name="J. Bacteriol.">
        <title>The complete genome sequence of the lactic acid bacterial paradigm Lactococcus lactis subsp. cremoris MG1363.</title>
        <authorList>
            <person name="Wegmann U."/>
            <person name="O'Connell-Motherway M."/>
            <person name="Zomer A."/>
            <person name="Buist G."/>
            <person name="Shearman C."/>
            <person name="Canchaya C."/>
            <person name="Ventura M."/>
            <person name="Goesmann A."/>
            <person name="Gasson M.J."/>
            <person name="Kuipers O.P."/>
            <person name="van Sinderen D."/>
            <person name="Kok J."/>
        </authorList>
    </citation>
    <scope>NUCLEOTIDE SEQUENCE [LARGE SCALE GENOMIC DNA]</scope>
    <source>
        <strain>MG1363</strain>
    </source>
</reference>
<dbReference type="EMBL" id="AM406671">
    <property type="protein sequence ID" value="CAL98450.1"/>
    <property type="molecule type" value="Genomic_DNA"/>
</dbReference>
<dbReference type="RefSeq" id="WP_011675652.1">
    <property type="nucleotide sequence ID" value="NC_009004.1"/>
</dbReference>
<dbReference type="SMR" id="A2RMC2"/>
<dbReference type="STRING" id="416870.llmg_1880"/>
<dbReference type="GeneID" id="61108950"/>
<dbReference type="KEGG" id="llm:llmg_1880"/>
<dbReference type="eggNOG" id="COG0231">
    <property type="taxonomic scope" value="Bacteria"/>
</dbReference>
<dbReference type="HOGENOM" id="CLU_074944_3_0_9"/>
<dbReference type="OrthoDB" id="9801844at2"/>
<dbReference type="PhylomeDB" id="A2RMC2"/>
<dbReference type="UniPathway" id="UPA00345"/>
<dbReference type="Proteomes" id="UP000000364">
    <property type="component" value="Chromosome"/>
</dbReference>
<dbReference type="GO" id="GO:0005737">
    <property type="term" value="C:cytoplasm"/>
    <property type="evidence" value="ECO:0007669"/>
    <property type="project" value="UniProtKB-SubCell"/>
</dbReference>
<dbReference type="GO" id="GO:0003746">
    <property type="term" value="F:translation elongation factor activity"/>
    <property type="evidence" value="ECO:0007669"/>
    <property type="project" value="UniProtKB-UniRule"/>
</dbReference>
<dbReference type="GO" id="GO:0043043">
    <property type="term" value="P:peptide biosynthetic process"/>
    <property type="evidence" value="ECO:0007669"/>
    <property type="project" value="InterPro"/>
</dbReference>
<dbReference type="CDD" id="cd04470">
    <property type="entry name" value="S1_EF-P_repeat_1"/>
    <property type="match status" value="1"/>
</dbReference>
<dbReference type="CDD" id="cd05794">
    <property type="entry name" value="S1_EF-P_repeat_2"/>
    <property type="match status" value="1"/>
</dbReference>
<dbReference type="FunFam" id="2.30.30.30:FF:000003">
    <property type="entry name" value="Elongation factor P"/>
    <property type="match status" value="1"/>
</dbReference>
<dbReference type="FunFam" id="2.40.50.140:FF:000004">
    <property type="entry name" value="Elongation factor P"/>
    <property type="match status" value="1"/>
</dbReference>
<dbReference type="FunFam" id="2.40.50.140:FF:000009">
    <property type="entry name" value="Elongation factor P"/>
    <property type="match status" value="1"/>
</dbReference>
<dbReference type="Gene3D" id="2.30.30.30">
    <property type="match status" value="1"/>
</dbReference>
<dbReference type="Gene3D" id="2.40.50.140">
    <property type="entry name" value="Nucleic acid-binding proteins"/>
    <property type="match status" value="2"/>
</dbReference>
<dbReference type="HAMAP" id="MF_00141">
    <property type="entry name" value="EF_P"/>
    <property type="match status" value="1"/>
</dbReference>
<dbReference type="InterPro" id="IPR015365">
    <property type="entry name" value="Elong-fact-P_C"/>
</dbReference>
<dbReference type="InterPro" id="IPR012340">
    <property type="entry name" value="NA-bd_OB-fold"/>
</dbReference>
<dbReference type="InterPro" id="IPR014722">
    <property type="entry name" value="Rib_uL2_dom2"/>
</dbReference>
<dbReference type="InterPro" id="IPR020599">
    <property type="entry name" value="Transl_elong_fac_P/YeiP"/>
</dbReference>
<dbReference type="InterPro" id="IPR013185">
    <property type="entry name" value="Transl_elong_KOW-like"/>
</dbReference>
<dbReference type="InterPro" id="IPR001059">
    <property type="entry name" value="Transl_elong_P/YeiP_cen"/>
</dbReference>
<dbReference type="InterPro" id="IPR013852">
    <property type="entry name" value="Transl_elong_P/YeiP_CS"/>
</dbReference>
<dbReference type="InterPro" id="IPR011768">
    <property type="entry name" value="Transl_elongation_fac_P"/>
</dbReference>
<dbReference type="InterPro" id="IPR008991">
    <property type="entry name" value="Translation_prot_SH3-like_sf"/>
</dbReference>
<dbReference type="NCBIfam" id="TIGR00038">
    <property type="entry name" value="efp"/>
    <property type="match status" value="1"/>
</dbReference>
<dbReference type="NCBIfam" id="NF001810">
    <property type="entry name" value="PRK00529.1"/>
    <property type="match status" value="1"/>
</dbReference>
<dbReference type="PANTHER" id="PTHR30053">
    <property type="entry name" value="ELONGATION FACTOR P"/>
    <property type="match status" value="1"/>
</dbReference>
<dbReference type="PANTHER" id="PTHR30053:SF12">
    <property type="entry name" value="ELONGATION FACTOR P (EF-P) FAMILY PROTEIN"/>
    <property type="match status" value="1"/>
</dbReference>
<dbReference type="Pfam" id="PF01132">
    <property type="entry name" value="EFP"/>
    <property type="match status" value="1"/>
</dbReference>
<dbReference type="Pfam" id="PF08207">
    <property type="entry name" value="EFP_N"/>
    <property type="match status" value="1"/>
</dbReference>
<dbReference type="Pfam" id="PF09285">
    <property type="entry name" value="Elong-fact-P_C"/>
    <property type="match status" value="1"/>
</dbReference>
<dbReference type="PIRSF" id="PIRSF005901">
    <property type="entry name" value="EF-P"/>
    <property type="match status" value="1"/>
</dbReference>
<dbReference type="SMART" id="SM01185">
    <property type="entry name" value="EFP"/>
    <property type="match status" value="1"/>
</dbReference>
<dbReference type="SMART" id="SM00841">
    <property type="entry name" value="Elong-fact-P_C"/>
    <property type="match status" value="1"/>
</dbReference>
<dbReference type="SUPFAM" id="SSF50249">
    <property type="entry name" value="Nucleic acid-binding proteins"/>
    <property type="match status" value="2"/>
</dbReference>
<dbReference type="SUPFAM" id="SSF50104">
    <property type="entry name" value="Translation proteins SH3-like domain"/>
    <property type="match status" value="1"/>
</dbReference>
<dbReference type="PROSITE" id="PS01275">
    <property type="entry name" value="EFP"/>
    <property type="match status" value="1"/>
</dbReference>
<sequence>MVLAKDLKSGMTFLNGEKLLRVMEASHHKPGKGNTIMRMKLKDVRSGSTFDDTYRPEDKFEQAVIETVTAQYLYSMDDIANFMNNETYEQYEIPVEQVKDELLYVLENTDVKIQFYGTEVIGIQLPTTVVLEVTETQPSIKGATVTGSGKPATMETGLVVNVPDFVEVGTKLEINTQTGEYLKRA</sequence>
<comment type="function">
    <text evidence="1">Involved in peptide bond synthesis. Stimulates efficient translation and peptide-bond synthesis on native or reconstituted 70S ribosomes in vitro. Probably functions indirectly by altering the affinity of the ribosome for aminoacyl-tRNA, thus increasing their reactivity as acceptors for peptidyl transferase.</text>
</comment>
<comment type="pathway">
    <text evidence="1">Protein biosynthesis; polypeptide chain elongation.</text>
</comment>
<comment type="subcellular location">
    <subcellularLocation>
        <location evidence="1">Cytoplasm</location>
    </subcellularLocation>
</comment>
<comment type="similarity">
    <text evidence="1">Belongs to the elongation factor P family.</text>
</comment>
<name>EFP_LACLM</name>
<proteinExistence type="inferred from homology"/>
<gene>
    <name evidence="1" type="primary">efp</name>
    <name type="ordered locus">llmg_1880</name>
</gene>
<feature type="chain" id="PRO_1000010766" description="Elongation factor P">
    <location>
        <begin position="1"/>
        <end position="185"/>
    </location>
</feature>
<organism>
    <name type="scientific">Lactococcus lactis subsp. cremoris (strain MG1363)</name>
    <dbReference type="NCBI Taxonomy" id="416870"/>
    <lineage>
        <taxon>Bacteria</taxon>
        <taxon>Bacillati</taxon>
        <taxon>Bacillota</taxon>
        <taxon>Bacilli</taxon>
        <taxon>Lactobacillales</taxon>
        <taxon>Streptococcaceae</taxon>
        <taxon>Lactococcus</taxon>
        <taxon>Lactococcus cremoris subsp. cremoris</taxon>
    </lineage>
</organism>
<protein>
    <recommendedName>
        <fullName evidence="1">Elongation factor P</fullName>
        <shortName evidence="1">EF-P</shortName>
    </recommendedName>
</protein>
<evidence type="ECO:0000255" key="1">
    <source>
        <dbReference type="HAMAP-Rule" id="MF_00141"/>
    </source>
</evidence>
<accession>A2RMC2</accession>
<keyword id="KW-0963">Cytoplasm</keyword>
<keyword id="KW-0251">Elongation factor</keyword>
<keyword id="KW-0648">Protein biosynthesis</keyword>